<comment type="function">
    <text evidence="1">Involved in the histone deacetylase (HDAC1)-dependent transcriptional repression activity. When overexpressed in lung cancer cell line that lacks p53/TP53 expression, inhibits cell growth (By similarity).</text>
</comment>
<comment type="subunit">
    <text evidence="1">Component of the Sin3/HDAC1 corepressor complex at least composed of BRMS1, BRMS1L and ING2/ING1L. Interacts with HDAC and SIN3A (By similarity).</text>
</comment>
<comment type="subcellular location">
    <subcellularLocation>
        <location evidence="1">Nucleus</location>
    </subcellularLocation>
</comment>
<comment type="similarity">
    <text evidence="5">Belongs to the BRMS1 family.</text>
</comment>
<gene>
    <name type="primary">BRMS1L</name>
</gene>
<sequence>MPVHSRGDKKETNHHDEMEVDYAENEGSSSEDEDTESSSVSEDGDSSEMDDEDCERRRMECLDEMSNLEKQFTDLKDQLYKERLSQVDAKLQEVIAGKAPEYLEPLATLQENMQIRTKVAGIYRELCLESVKNKYECEIQASRQHCESEKLLLYDTVQSELEEKIRRLEEDRHSIDITSELWNDELQSRKKRKDPFSPDKKKPVVVSGPYIVYMLQDLDILEDWTTIRKAMATLGPHRVKTEPPVKLEKHLHSARSEEGRLYYDGEWYIRGQTICIDKKDECPTSAVITTINHDEVWFKRPDGSKSKLYISQLQKGKYSIKHS</sequence>
<protein>
    <recommendedName>
        <fullName>Breast cancer metastasis-suppressor 1-like protein</fullName>
    </recommendedName>
</protein>
<accession>A4FV29</accession>
<evidence type="ECO:0000250" key="1"/>
<evidence type="ECO:0000250" key="2">
    <source>
        <dbReference type="UniProtKB" id="Q5PSV4"/>
    </source>
</evidence>
<evidence type="ECO:0000255" key="3"/>
<evidence type="ECO:0000256" key="4">
    <source>
        <dbReference type="SAM" id="MobiDB-lite"/>
    </source>
</evidence>
<evidence type="ECO:0000305" key="5"/>
<dbReference type="EMBL" id="BC123661">
    <property type="protein sequence ID" value="AAI23662.1"/>
    <property type="molecule type" value="mRNA"/>
</dbReference>
<dbReference type="RefSeq" id="NP_001076897.1">
    <property type="nucleotide sequence ID" value="NM_001083428.1"/>
</dbReference>
<dbReference type="SMR" id="A4FV29"/>
<dbReference type="FunCoup" id="A4FV29">
    <property type="interactions" value="2841"/>
</dbReference>
<dbReference type="IntAct" id="A4FV29">
    <property type="interactions" value="1"/>
</dbReference>
<dbReference type="STRING" id="9913.ENSBTAP00000024481"/>
<dbReference type="PaxDb" id="9913-ENSBTAP00000024481"/>
<dbReference type="GeneID" id="514432"/>
<dbReference type="KEGG" id="bta:514432"/>
<dbReference type="CTD" id="84312"/>
<dbReference type="VEuPathDB" id="HostDB:ENSBTAG00000018400"/>
<dbReference type="eggNOG" id="KOG4466">
    <property type="taxonomic scope" value="Eukaryota"/>
</dbReference>
<dbReference type="HOGENOM" id="CLU_050862_2_0_1"/>
<dbReference type="InParanoid" id="A4FV29"/>
<dbReference type="OMA" id="XIYRELC"/>
<dbReference type="OrthoDB" id="20886at2759"/>
<dbReference type="TreeFam" id="TF323740"/>
<dbReference type="Proteomes" id="UP000009136">
    <property type="component" value="Chromosome 21"/>
</dbReference>
<dbReference type="Bgee" id="ENSBTAG00000018400">
    <property type="expression patterns" value="Expressed in occipital lobe and 104 other cell types or tissues"/>
</dbReference>
<dbReference type="GO" id="GO:0070822">
    <property type="term" value="C:Sin3-type complex"/>
    <property type="evidence" value="ECO:0000318"/>
    <property type="project" value="GO_Central"/>
</dbReference>
<dbReference type="GO" id="GO:0042826">
    <property type="term" value="F:histone deacetylase binding"/>
    <property type="evidence" value="ECO:0000318"/>
    <property type="project" value="GO_Central"/>
</dbReference>
<dbReference type="GO" id="GO:0000122">
    <property type="term" value="P:negative regulation of transcription by RNA polymerase II"/>
    <property type="evidence" value="ECO:0000318"/>
    <property type="project" value="GO_Central"/>
</dbReference>
<dbReference type="FunFam" id="1.20.5.1500:FF:000002">
    <property type="entry name" value="breast cancer metastasis-suppressor 1-like protein-A"/>
    <property type="match status" value="1"/>
</dbReference>
<dbReference type="Gene3D" id="1.20.5.1500">
    <property type="match status" value="1"/>
</dbReference>
<dbReference type="InterPro" id="IPR013907">
    <property type="entry name" value="Sds3"/>
</dbReference>
<dbReference type="PANTHER" id="PTHR21964">
    <property type="entry name" value="BREAST CANCER METASTASIS-SUPPRESSOR 1"/>
    <property type="match status" value="1"/>
</dbReference>
<dbReference type="Pfam" id="PF08598">
    <property type="entry name" value="Sds3"/>
    <property type="match status" value="1"/>
</dbReference>
<dbReference type="SMART" id="SM01401">
    <property type="entry name" value="Sds3"/>
    <property type="match status" value="1"/>
</dbReference>
<reference key="1">
    <citation type="submission" date="2006-09" db="EMBL/GenBank/DDBJ databases">
        <authorList>
            <consortium name="NIH - Mammalian Gene Collection (MGC) project"/>
        </authorList>
    </citation>
    <scope>NUCLEOTIDE SEQUENCE [LARGE SCALE MRNA]</scope>
    <source>
        <strain>Hereford</strain>
        <tissue>Brain cortex</tissue>
    </source>
</reference>
<proteinExistence type="evidence at transcript level"/>
<organism>
    <name type="scientific">Bos taurus</name>
    <name type="common">Bovine</name>
    <dbReference type="NCBI Taxonomy" id="9913"/>
    <lineage>
        <taxon>Eukaryota</taxon>
        <taxon>Metazoa</taxon>
        <taxon>Chordata</taxon>
        <taxon>Craniata</taxon>
        <taxon>Vertebrata</taxon>
        <taxon>Euteleostomi</taxon>
        <taxon>Mammalia</taxon>
        <taxon>Eutheria</taxon>
        <taxon>Laurasiatheria</taxon>
        <taxon>Artiodactyla</taxon>
        <taxon>Ruminantia</taxon>
        <taxon>Pecora</taxon>
        <taxon>Bovidae</taxon>
        <taxon>Bovinae</taxon>
        <taxon>Bos</taxon>
    </lineage>
</organism>
<feature type="chain" id="PRO_0000305308" description="Breast cancer metastasis-suppressor 1-like protein">
    <location>
        <begin position="1"/>
        <end position="323"/>
    </location>
</feature>
<feature type="region of interest" description="Disordered" evidence="4">
    <location>
        <begin position="1"/>
        <end position="56"/>
    </location>
</feature>
<feature type="coiled-coil region" evidence="3">
    <location>
        <begin position="52"/>
        <end position="84"/>
    </location>
</feature>
<feature type="coiled-coil region" evidence="3">
    <location>
        <begin position="149"/>
        <end position="180"/>
    </location>
</feature>
<feature type="compositionally biased region" description="Basic and acidic residues" evidence="4">
    <location>
        <begin position="1"/>
        <end position="17"/>
    </location>
</feature>
<feature type="compositionally biased region" description="Acidic residues" evidence="4">
    <location>
        <begin position="18"/>
        <end position="53"/>
    </location>
</feature>
<feature type="modified residue" description="Phosphoserine" evidence="2">
    <location>
        <position position="197"/>
    </location>
</feature>
<feature type="cross-link" description="Glycyl lysine isopeptide (Lys-Gly) (interchain with G-Cter in SUMO2)" evidence="2">
    <location>
        <position position="240"/>
    </location>
</feature>
<feature type="cross-link" description="Glycyl lysine isopeptide (Lys-Gly) (interchain with G-Cter in SUMO2)" evidence="2">
    <location>
        <position position="246"/>
    </location>
</feature>
<keyword id="KW-0175">Coiled coil</keyword>
<keyword id="KW-0341">Growth regulation</keyword>
<keyword id="KW-1017">Isopeptide bond</keyword>
<keyword id="KW-0539">Nucleus</keyword>
<keyword id="KW-0597">Phosphoprotein</keyword>
<keyword id="KW-1185">Reference proteome</keyword>
<keyword id="KW-0678">Repressor</keyword>
<keyword id="KW-0804">Transcription</keyword>
<keyword id="KW-0805">Transcription regulation</keyword>
<keyword id="KW-0832">Ubl conjugation</keyword>
<name>BRM1L_BOVIN</name>